<gene>
    <name evidence="1" type="primary">clpX</name>
    <name type="ordered locus">SMU_949</name>
</gene>
<protein>
    <recommendedName>
        <fullName evidence="1">ATP-dependent Clp protease ATP-binding subunit ClpX</fullName>
    </recommendedName>
</protein>
<feature type="chain" id="PRO_0000160431" description="ATP-dependent Clp protease ATP-binding subunit ClpX">
    <location>
        <begin position="1"/>
        <end position="410"/>
    </location>
</feature>
<feature type="domain" description="ClpX-type ZB" evidence="2">
    <location>
        <begin position="1"/>
        <end position="54"/>
    </location>
</feature>
<feature type="binding site" evidence="2">
    <location>
        <position position="13"/>
    </location>
    <ligand>
        <name>Zn(2+)</name>
        <dbReference type="ChEBI" id="CHEBI:29105"/>
    </ligand>
</feature>
<feature type="binding site" evidence="2">
    <location>
        <position position="16"/>
    </location>
    <ligand>
        <name>Zn(2+)</name>
        <dbReference type="ChEBI" id="CHEBI:29105"/>
    </ligand>
</feature>
<feature type="binding site" evidence="2">
    <location>
        <position position="35"/>
    </location>
    <ligand>
        <name>Zn(2+)</name>
        <dbReference type="ChEBI" id="CHEBI:29105"/>
    </ligand>
</feature>
<feature type="binding site" evidence="2">
    <location>
        <position position="38"/>
    </location>
    <ligand>
        <name>Zn(2+)</name>
        <dbReference type="ChEBI" id="CHEBI:29105"/>
    </ligand>
</feature>
<feature type="binding site" evidence="1">
    <location>
        <begin position="119"/>
        <end position="126"/>
    </location>
    <ligand>
        <name>ATP</name>
        <dbReference type="ChEBI" id="CHEBI:30616"/>
    </ligand>
</feature>
<comment type="function">
    <text evidence="1">ATP-dependent specificity component of the Clp protease. It directs the protease to specific substrates. Can perform chaperone functions in the absence of ClpP.</text>
</comment>
<comment type="subunit">
    <text evidence="1">Component of the ClpX-ClpP complex. Forms a hexameric ring that, in the presence of ATP, binds to fourteen ClpP subunits assembled into a disk-like structure with a central cavity, resembling the structure of eukaryotic proteasomes.</text>
</comment>
<comment type="similarity">
    <text evidence="1">Belongs to the ClpX chaperone family.</text>
</comment>
<sequence>MAGNRTNDVTVHCSFCGKNQDEVKKIIAGNGVFICNECVELSQEIIREELAEEVLADLSEVPKPKELLAILDSYVIGQDRAKRALAVAVYNHYKRISFTESQDDQDVDLQKSNILMIGPTGSGKTFLAQTLAKSLNVPFAIADATALTEAGYVGEDVENILLKLIQAADYNVERAERGIIYVDEIDKIAKKGENVSITRDVSGEGVQQALLKIIEGTVASVPPQGGRKHPQQEMIQIDTKNILFIVGGAFDGIEDIVKQRLGEKIIGFGQNNKKIDDQSSYMQEIISEDIQKFGLIPEFIGRLPVLAALEQLTVDDLVKILTEPKNALVKQYQTLLSYDGVELEFDQEALQAIAQKAIERKTGARGLRSIIEETMLDLMFEIPSQEDVTCVRITKKAVEGTDKPILETAS</sequence>
<organism>
    <name type="scientific">Streptococcus mutans serotype c (strain ATCC 700610 / UA159)</name>
    <dbReference type="NCBI Taxonomy" id="210007"/>
    <lineage>
        <taxon>Bacteria</taxon>
        <taxon>Bacillati</taxon>
        <taxon>Bacillota</taxon>
        <taxon>Bacilli</taxon>
        <taxon>Lactobacillales</taxon>
        <taxon>Streptococcaceae</taxon>
        <taxon>Streptococcus</taxon>
    </lineage>
</organism>
<evidence type="ECO:0000255" key="1">
    <source>
        <dbReference type="HAMAP-Rule" id="MF_00175"/>
    </source>
</evidence>
<evidence type="ECO:0000255" key="2">
    <source>
        <dbReference type="PROSITE-ProRule" id="PRU01250"/>
    </source>
</evidence>
<dbReference type="EMBL" id="AE014133">
    <property type="protein sequence ID" value="AAN58653.1"/>
    <property type="molecule type" value="Genomic_DNA"/>
</dbReference>
<dbReference type="RefSeq" id="NP_721347.1">
    <property type="nucleotide sequence ID" value="NC_004350.2"/>
</dbReference>
<dbReference type="RefSeq" id="WP_002262816.1">
    <property type="nucleotide sequence ID" value="NC_004350.2"/>
</dbReference>
<dbReference type="SMR" id="Q8DUI0"/>
<dbReference type="STRING" id="210007.SMU_949"/>
<dbReference type="GeneID" id="93859535"/>
<dbReference type="KEGG" id="smu:SMU_949"/>
<dbReference type="PATRIC" id="fig|210007.7.peg.846"/>
<dbReference type="eggNOG" id="COG1219">
    <property type="taxonomic scope" value="Bacteria"/>
</dbReference>
<dbReference type="HOGENOM" id="CLU_014218_8_2_9"/>
<dbReference type="OrthoDB" id="9804062at2"/>
<dbReference type="PhylomeDB" id="Q8DUI0"/>
<dbReference type="Proteomes" id="UP000002512">
    <property type="component" value="Chromosome"/>
</dbReference>
<dbReference type="GO" id="GO:0009376">
    <property type="term" value="C:HslUV protease complex"/>
    <property type="evidence" value="ECO:0007669"/>
    <property type="project" value="TreeGrafter"/>
</dbReference>
<dbReference type="GO" id="GO:0005524">
    <property type="term" value="F:ATP binding"/>
    <property type="evidence" value="ECO:0007669"/>
    <property type="project" value="UniProtKB-UniRule"/>
</dbReference>
<dbReference type="GO" id="GO:0016887">
    <property type="term" value="F:ATP hydrolysis activity"/>
    <property type="evidence" value="ECO:0007669"/>
    <property type="project" value="InterPro"/>
</dbReference>
<dbReference type="GO" id="GO:0140662">
    <property type="term" value="F:ATP-dependent protein folding chaperone"/>
    <property type="evidence" value="ECO:0007669"/>
    <property type="project" value="InterPro"/>
</dbReference>
<dbReference type="GO" id="GO:0046983">
    <property type="term" value="F:protein dimerization activity"/>
    <property type="evidence" value="ECO:0007669"/>
    <property type="project" value="InterPro"/>
</dbReference>
<dbReference type="GO" id="GO:0051082">
    <property type="term" value="F:unfolded protein binding"/>
    <property type="evidence" value="ECO:0007669"/>
    <property type="project" value="UniProtKB-UniRule"/>
</dbReference>
<dbReference type="GO" id="GO:0008270">
    <property type="term" value="F:zinc ion binding"/>
    <property type="evidence" value="ECO:0007669"/>
    <property type="project" value="InterPro"/>
</dbReference>
<dbReference type="GO" id="GO:0051301">
    <property type="term" value="P:cell division"/>
    <property type="evidence" value="ECO:0007669"/>
    <property type="project" value="TreeGrafter"/>
</dbReference>
<dbReference type="GO" id="GO:0051603">
    <property type="term" value="P:proteolysis involved in protein catabolic process"/>
    <property type="evidence" value="ECO:0007669"/>
    <property type="project" value="TreeGrafter"/>
</dbReference>
<dbReference type="CDD" id="cd19497">
    <property type="entry name" value="RecA-like_ClpX"/>
    <property type="match status" value="1"/>
</dbReference>
<dbReference type="FunFam" id="1.10.8.60:FF:000002">
    <property type="entry name" value="ATP-dependent Clp protease ATP-binding subunit ClpX"/>
    <property type="match status" value="1"/>
</dbReference>
<dbReference type="FunFam" id="3.40.50.300:FF:000005">
    <property type="entry name" value="ATP-dependent Clp protease ATP-binding subunit ClpX"/>
    <property type="match status" value="1"/>
</dbReference>
<dbReference type="Gene3D" id="1.10.8.60">
    <property type="match status" value="1"/>
</dbReference>
<dbReference type="Gene3D" id="6.20.220.10">
    <property type="entry name" value="ClpX chaperone, C4-type zinc finger domain"/>
    <property type="match status" value="1"/>
</dbReference>
<dbReference type="Gene3D" id="3.40.50.300">
    <property type="entry name" value="P-loop containing nucleotide triphosphate hydrolases"/>
    <property type="match status" value="1"/>
</dbReference>
<dbReference type="HAMAP" id="MF_00175">
    <property type="entry name" value="ClpX"/>
    <property type="match status" value="1"/>
</dbReference>
<dbReference type="InterPro" id="IPR003593">
    <property type="entry name" value="AAA+_ATPase"/>
</dbReference>
<dbReference type="InterPro" id="IPR050052">
    <property type="entry name" value="ATP-dep_Clp_protease_ClpX"/>
</dbReference>
<dbReference type="InterPro" id="IPR003959">
    <property type="entry name" value="ATPase_AAA_core"/>
</dbReference>
<dbReference type="InterPro" id="IPR019489">
    <property type="entry name" value="Clp_ATPase_C"/>
</dbReference>
<dbReference type="InterPro" id="IPR004487">
    <property type="entry name" value="Clp_protease_ATP-bd_su_ClpX"/>
</dbReference>
<dbReference type="InterPro" id="IPR046425">
    <property type="entry name" value="ClpX_bact"/>
</dbReference>
<dbReference type="InterPro" id="IPR027417">
    <property type="entry name" value="P-loop_NTPase"/>
</dbReference>
<dbReference type="InterPro" id="IPR010603">
    <property type="entry name" value="Znf_CppX_C4"/>
</dbReference>
<dbReference type="InterPro" id="IPR038366">
    <property type="entry name" value="Znf_CppX_C4_sf"/>
</dbReference>
<dbReference type="NCBIfam" id="TIGR00382">
    <property type="entry name" value="clpX"/>
    <property type="match status" value="1"/>
</dbReference>
<dbReference type="NCBIfam" id="NF003745">
    <property type="entry name" value="PRK05342.1"/>
    <property type="match status" value="1"/>
</dbReference>
<dbReference type="PANTHER" id="PTHR48102:SF7">
    <property type="entry name" value="ATP-DEPENDENT CLP PROTEASE ATP-BINDING SUBUNIT CLPX-LIKE, MITOCHONDRIAL"/>
    <property type="match status" value="1"/>
</dbReference>
<dbReference type="PANTHER" id="PTHR48102">
    <property type="entry name" value="ATP-DEPENDENT CLP PROTEASE ATP-BINDING SUBUNIT CLPX-LIKE, MITOCHONDRIAL-RELATED"/>
    <property type="match status" value="1"/>
</dbReference>
<dbReference type="Pfam" id="PF07724">
    <property type="entry name" value="AAA_2"/>
    <property type="match status" value="1"/>
</dbReference>
<dbReference type="Pfam" id="PF10431">
    <property type="entry name" value="ClpB_D2-small"/>
    <property type="match status" value="1"/>
</dbReference>
<dbReference type="Pfam" id="PF06689">
    <property type="entry name" value="zf-C4_ClpX"/>
    <property type="match status" value="1"/>
</dbReference>
<dbReference type="SMART" id="SM00382">
    <property type="entry name" value="AAA"/>
    <property type="match status" value="1"/>
</dbReference>
<dbReference type="SMART" id="SM01086">
    <property type="entry name" value="ClpB_D2-small"/>
    <property type="match status" value="1"/>
</dbReference>
<dbReference type="SMART" id="SM00994">
    <property type="entry name" value="zf-C4_ClpX"/>
    <property type="match status" value="1"/>
</dbReference>
<dbReference type="SUPFAM" id="SSF57716">
    <property type="entry name" value="Glucocorticoid receptor-like (DNA-binding domain)"/>
    <property type="match status" value="1"/>
</dbReference>
<dbReference type="SUPFAM" id="SSF52540">
    <property type="entry name" value="P-loop containing nucleoside triphosphate hydrolases"/>
    <property type="match status" value="1"/>
</dbReference>
<dbReference type="PROSITE" id="PS51902">
    <property type="entry name" value="CLPX_ZB"/>
    <property type="match status" value="1"/>
</dbReference>
<proteinExistence type="inferred from homology"/>
<keyword id="KW-0067">ATP-binding</keyword>
<keyword id="KW-0143">Chaperone</keyword>
<keyword id="KW-0479">Metal-binding</keyword>
<keyword id="KW-0547">Nucleotide-binding</keyword>
<keyword id="KW-1185">Reference proteome</keyword>
<keyword id="KW-0862">Zinc</keyword>
<reference key="1">
    <citation type="journal article" date="2002" name="Proc. Natl. Acad. Sci. U.S.A.">
        <title>Genome sequence of Streptococcus mutans UA159, a cariogenic dental pathogen.</title>
        <authorList>
            <person name="Ajdic D.J."/>
            <person name="McShan W.M."/>
            <person name="McLaughlin R.E."/>
            <person name="Savic G."/>
            <person name="Chang J."/>
            <person name="Carson M.B."/>
            <person name="Primeaux C."/>
            <person name="Tian R."/>
            <person name="Kenton S."/>
            <person name="Jia H.G."/>
            <person name="Lin S.P."/>
            <person name="Qian Y."/>
            <person name="Li S."/>
            <person name="Zhu H."/>
            <person name="Najar F.Z."/>
            <person name="Lai H."/>
            <person name="White J."/>
            <person name="Roe B.A."/>
            <person name="Ferretti J.J."/>
        </authorList>
    </citation>
    <scope>NUCLEOTIDE SEQUENCE [LARGE SCALE GENOMIC DNA]</scope>
    <source>
        <strain>ATCC 700610 / UA159</strain>
    </source>
</reference>
<name>CLPX_STRMU</name>
<accession>Q8DUI0</accession>